<gene>
    <name evidence="1" type="primary">rlmL</name>
    <name type="ordered locus">Swoo_2143</name>
</gene>
<comment type="function">
    <text evidence="1">Specifically methylates the guanine in position 2445 (m2G2445) and the guanine in position 2069 (m7G2069) of 23S rRNA.</text>
</comment>
<comment type="catalytic activity">
    <reaction evidence="1">
        <text>guanosine(2445) in 23S rRNA + S-adenosyl-L-methionine = N(2)-methylguanosine(2445) in 23S rRNA + S-adenosyl-L-homocysteine + H(+)</text>
        <dbReference type="Rhea" id="RHEA:42740"/>
        <dbReference type="Rhea" id="RHEA-COMP:10215"/>
        <dbReference type="Rhea" id="RHEA-COMP:10216"/>
        <dbReference type="ChEBI" id="CHEBI:15378"/>
        <dbReference type="ChEBI" id="CHEBI:57856"/>
        <dbReference type="ChEBI" id="CHEBI:59789"/>
        <dbReference type="ChEBI" id="CHEBI:74269"/>
        <dbReference type="ChEBI" id="CHEBI:74481"/>
        <dbReference type="EC" id="2.1.1.173"/>
    </reaction>
</comment>
<comment type="catalytic activity">
    <reaction evidence="1">
        <text>guanosine(2069) in 23S rRNA + S-adenosyl-L-methionine = N(2)-methylguanosine(2069) in 23S rRNA + S-adenosyl-L-homocysteine + H(+)</text>
        <dbReference type="Rhea" id="RHEA:43772"/>
        <dbReference type="Rhea" id="RHEA-COMP:10688"/>
        <dbReference type="Rhea" id="RHEA-COMP:10689"/>
        <dbReference type="ChEBI" id="CHEBI:15378"/>
        <dbReference type="ChEBI" id="CHEBI:57856"/>
        <dbReference type="ChEBI" id="CHEBI:59789"/>
        <dbReference type="ChEBI" id="CHEBI:74269"/>
        <dbReference type="ChEBI" id="CHEBI:74481"/>
        <dbReference type="EC" id="2.1.1.264"/>
    </reaction>
</comment>
<comment type="subcellular location">
    <subcellularLocation>
        <location evidence="1">Cytoplasm</location>
    </subcellularLocation>
</comment>
<comment type="similarity">
    <text evidence="1">Belongs to the methyltransferase superfamily. RlmKL family.</text>
</comment>
<reference key="1">
    <citation type="submission" date="2008-02" db="EMBL/GenBank/DDBJ databases">
        <title>Complete sequence of Shewanella woodyi ATCC 51908.</title>
        <authorList>
            <consortium name="US DOE Joint Genome Institute"/>
            <person name="Copeland A."/>
            <person name="Lucas S."/>
            <person name="Lapidus A."/>
            <person name="Glavina del Rio T."/>
            <person name="Dalin E."/>
            <person name="Tice H."/>
            <person name="Bruce D."/>
            <person name="Goodwin L."/>
            <person name="Pitluck S."/>
            <person name="Sims D."/>
            <person name="Brettin T."/>
            <person name="Detter J.C."/>
            <person name="Han C."/>
            <person name="Kuske C.R."/>
            <person name="Schmutz J."/>
            <person name="Larimer F."/>
            <person name="Land M."/>
            <person name="Hauser L."/>
            <person name="Kyrpides N."/>
            <person name="Lykidis A."/>
            <person name="Zhao J.-S."/>
            <person name="Richardson P."/>
        </authorList>
    </citation>
    <scope>NUCLEOTIDE SEQUENCE [LARGE SCALE GENOMIC DNA]</scope>
    <source>
        <strain>ATCC 51908 / MS32</strain>
    </source>
</reference>
<dbReference type="EC" id="2.1.1.173" evidence="1"/>
<dbReference type="EC" id="2.1.1.264" evidence="1"/>
<dbReference type="EMBL" id="CP000961">
    <property type="protein sequence ID" value="ACA86427.1"/>
    <property type="molecule type" value="Genomic_DNA"/>
</dbReference>
<dbReference type="RefSeq" id="WP_012324772.1">
    <property type="nucleotide sequence ID" value="NC_010506.1"/>
</dbReference>
<dbReference type="SMR" id="B1KDN0"/>
<dbReference type="STRING" id="392500.Swoo_2143"/>
<dbReference type="KEGG" id="swd:Swoo_2143"/>
<dbReference type="eggNOG" id="COG0116">
    <property type="taxonomic scope" value="Bacteria"/>
</dbReference>
<dbReference type="eggNOG" id="COG1092">
    <property type="taxonomic scope" value="Bacteria"/>
</dbReference>
<dbReference type="HOGENOM" id="CLU_014042_2_0_6"/>
<dbReference type="Proteomes" id="UP000002168">
    <property type="component" value="Chromosome"/>
</dbReference>
<dbReference type="GO" id="GO:0005737">
    <property type="term" value="C:cytoplasm"/>
    <property type="evidence" value="ECO:0007669"/>
    <property type="project" value="UniProtKB-SubCell"/>
</dbReference>
<dbReference type="GO" id="GO:0052915">
    <property type="term" value="F:23S rRNA (guanine(2445)-N(2))-methyltransferase activity"/>
    <property type="evidence" value="ECO:0007669"/>
    <property type="project" value="UniProtKB-UniRule"/>
</dbReference>
<dbReference type="GO" id="GO:0003723">
    <property type="term" value="F:RNA binding"/>
    <property type="evidence" value="ECO:0007669"/>
    <property type="project" value="UniProtKB-KW"/>
</dbReference>
<dbReference type="GO" id="GO:0070043">
    <property type="term" value="F:rRNA (guanine-N7-)-methyltransferase activity"/>
    <property type="evidence" value="ECO:0007669"/>
    <property type="project" value="UniProtKB-UniRule"/>
</dbReference>
<dbReference type="CDD" id="cd02440">
    <property type="entry name" value="AdoMet_MTases"/>
    <property type="match status" value="1"/>
</dbReference>
<dbReference type="CDD" id="cd11715">
    <property type="entry name" value="THUMP_AdoMetMT"/>
    <property type="match status" value="1"/>
</dbReference>
<dbReference type="FunFam" id="3.40.50.150:FF:000039">
    <property type="entry name" value="Ribosomal RNA large subunit methyltransferase K/L"/>
    <property type="match status" value="1"/>
</dbReference>
<dbReference type="Gene3D" id="3.30.2130.30">
    <property type="match status" value="1"/>
</dbReference>
<dbReference type="Gene3D" id="3.30.750.80">
    <property type="entry name" value="RNA methyltransferase domain (HRMD) like"/>
    <property type="match status" value="1"/>
</dbReference>
<dbReference type="Gene3D" id="3.40.50.150">
    <property type="entry name" value="Vaccinia Virus protein VP39"/>
    <property type="match status" value="2"/>
</dbReference>
<dbReference type="HAMAP" id="MF_01858">
    <property type="entry name" value="23SrRNA_methyltr_KL"/>
    <property type="match status" value="1"/>
</dbReference>
<dbReference type="InterPro" id="IPR017244">
    <property type="entry name" value="23SrRNA_methyltr_KL"/>
</dbReference>
<dbReference type="InterPro" id="IPR002052">
    <property type="entry name" value="DNA_methylase_N6_adenine_CS"/>
</dbReference>
<dbReference type="InterPro" id="IPR000241">
    <property type="entry name" value="RlmKL-like_Mtase"/>
</dbReference>
<dbReference type="InterPro" id="IPR053943">
    <property type="entry name" value="RlmKL-like_Mtase_CS"/>
</dbReference>
<dbReference type="InterPro" id="IPR054170">
    <property type="entry name" value="RlmL_1st"/>
</dbReference>
<dbReference type="InterPro" id="IPR019614">
    <property type="entry name" value="SAM-dep_methyl-trfase"/>
</dbReference>
<dbReference type="InterPro" id="IPR029063">
    <property type="entry name" value="SAM-dependent_MTases_sf"/>
</dbReference>
<dbReference type="InterPro" id="IPR004114">
    <property type="entry name" value="THUMP_dom"/>
</dbReference>
<dbReference type="NCBIfam" id="NF008748">
    <property type="entry name" value="PRK11783.1"/>
    <property type="match status" value="1"/>
</dbReference>
<dbReference type="PANTHER" id="PTHR47313">
    <property type="entry name" value="RIBOSOMAL RNA LARGE SUBUNIT METHYLTRANSFERASE K/L"/>
    <property type="match status" value="1"/>
</dbReference>
<dbReference type="PANTHER" id="PTHR47313:SF1">
    <property type="entry name" value="RIBOSOMAL RNA LARGE SUBUNIT METHYLTRANSFERASE K_L"/>
    <property type="match status" value="1"/>
</dbReference>
<dbReference type="Pfam" id="PF10672">
    <property type="entry name" value="Methyltrans_SAM"/>
    <property type="match status" value="1"/>
</dbReference>
<dbReference type="Pfam" id="PF22020">
    <property type="entry name" value="RlmL_1st"/>
    <property type="match status" value="1"/>
</dbReference>
<dbReference type="Pfam" id="PF02926">
    <property type="entry name" value="THUMP"/>
    <property type="match status" value="1"/>
</dbReference>
<dbReference type="Pfam" id="PF01170">
    <property type="entry name" value="UPF0020"/>
    <property type="match status" value="1"/>
</dbReference>
<dbReference type="PIRSF" id="PIRSF037618">
    <property type="entry name" value="RNA_Mtase_bacteria_prd"/>
    <property type="match status" value="1"/>
</dbReference>
<dbReference type="SMART" id="SM00981">
    <property type="entry name" value="THUMP"/>
    <property type="match status" value="1"/>
</dbReference>
<dbReference type="SUPFAM" id="SSF53335">
    <property type="entry name" value="S-adenosyl-L-methionine-dependent methyltransferases"/>
    <property type="match status" value="2"/>
</dbReference>
<dbReference type="PROSITE" id="PS51165">
    <property type="entry name" value="THUMP"/>
    <property type="match status" value="1"/>
</dbReference>
<dbReference type="PROSITE" id="PS01261">
    <property type="entry name" value="UPF0020"/>
    <property type="match status" value="1"/>
</dbReference>
<evidence type="ECO:0000255" key="1">
    <source>
        <dbReference type="HAMAP-Rule" id="MF_01858"/>
    </source>
</evidence>
<proteinExistence type="inferred from homology"/>
<feature type="chain" id="PRO_0000366835" description="Ribosomal RNA large subunit methyltransferase K/L">
    <location>
        <begin position="1"/>
        <end position="711"/>
    </location>
</feature>
<feature type="domain" description="THUMP" evidence="1">
    <location>
        <begin position="43"/>
        <end position="154"/>
    </location>
</feature>
<sequence length="711" mass="80403">MLNFFAAAPRGYEYALSLELADLGASDIKESVAGVYFSASLELGYRITLWSRIASRIIFVIHKGPCESPEQLYNAAYGIDWQMEFNHRSTFSIDFHGMGGFINNTMFGALKIKDAIVDRFRDDDCPRPDVARVDADFRIDAHYRRGQITIGLNFSGPALHKRGYRDITGEAPLKENLAANMLMRSGWQKNPVSLLDPFCGSGTILIEAAMMACDMAPGLHRERFGFEHWLRHNDKYWQELLDEAKARASIGITRCKTKFYGSDIDSRIVALAKKNAANAGVLELIDFSVTNALNVKVPEETGYLITNPPYGERLGTVTALLQLYYQLGDKFKAEFGGWNLAVLNSDVELLSALKLKADKQMKMNNGALECAFNLYTVHATNTRRVDPSNINREGDVSDIAVPFVNRVKKNIKQLQKWAKKEGIDSYRIYDADLPDYKVAIDKYLDYVVIQEYTAPVDIPESVTKRRLTDVLITLPGAIGIDPNNIILKTREKQKGTNQYEKIQANKLELITTEYGAKFKLNLKEYLDTGLFLDHRLTRKLVGEKSKDRDVLNLFAYTGTASVHAALGGAKSVKTVDMSNTYTNWAKENFALNGLNDDKYQFVQANCMQWIKTTHDKFDLIFIDPPTFSNSKRMEDSFDVLRDHVPLLSSLIKLLNPNGEIIFSNNKRKFKMEIEALEALNFTVKNIDNQTLPLDFKRNPQIHNTWLLTHGG</sequence>
<protein>
    <recommendedName>
        <fullName evidence="1">Ribosomal RNA large subunit methyltransferase K/L</fullName>
    </recommendedName>
    <domain>
        <recommendedName>
            <fullName evidence="1">23S rRNA m2G2445 methyltransferase</fullName>
            <ecNumber evidence="1">2.1.1.173</ecNumber>
        </recommendedName>
        <alternativeName>
            <fullName evidence="1">rRNA (guanine-N(2)-)-methyltransferase RlmL</fullName>
        </alternativeName>
    </domain>
    <domain>
        <recommendedName>
            <fullName evidence="1">23S rRNA m7G2069 methyltransferase</fullName>
            <ecNumber evidence="1">2.1.1.264</ecNumber>
        </recommendedName>
        <alternativeName>
            <fullName evidence="1">rRNA (guanine-N(7)-)-methyltransferase RlmK</fullName>
        </alternativeName>
    </domain>
</protein>
<name>RLMKL_SHEWM</name>
<organism>
    <name type="scientific">Shewanella woodyi (strain ATCC 51908 / MS32)</name>
    <dbReference type="NCBI Taxonomy" id="392500"/>
    <lineage>
        <taxon>Bacteria</taxon>
        <taxon>Pseudomonadati</taxon>
        <taxon>Pseudomonadota</taxon>
        <taxon>Gammaproteobacteria</taxon>
        <taxon>Alteromonadales</taxon>
        <taxon>Shewanellaceae</taxon>
        <taxon>Shewanella</taxon>
    </lineage>
</organism>
<accession>B1KDN0</accession>
<keyword id="KW-0963">Cytoplasm</keyword>
<keyword id="KW-0489">Methyltransferase</keyword>
<keyword id="KW-1185">Reference proteome</keyword>
<keyword id="KW-0694">RNA-binding</keyword>
<keyword id="KW-0698">rRNA processing</keyword>
<keyword id="KW-0949">S-adenosyl-L-methionine</keyword>
<keyword id="KW-0808">Transferase</keyword>